<name>Y4405_BORBR</name>
<comment type="similarity">
    <text evidence="1">Belongs to the UPF0301 (AlgH) family.</text>
</comment>
<comment type="sequence caution" evidence="2">
    <conflict type="erroneous initiation">
        <sequence resource="EMBL-CDS" id="CAE34768"/>
    </conflict>
</comment>
<protein>
    <recommendedName>
        <fullName evidence="1">UPF0301 protein BB4405</fullName>
    </recommendedName>
</protein>
<organism>
    <name type="scientific">Bordetella bronchiseptica (strain ATCC BAA-588 / NCTC 13252 / RB50)</name>
    <name type="common">Alcaligenes bronchisepticus</name>
    <dbReference type="NCBI Taxonomy" id="257310"/>
    <lineage>
        <taxon>Bacteria</taxon>
        <taxon>Pseudomonadati</taxon>
        <taxon>Pseudomonadota</taxon>
        <taxon>Betaproteobacteria</taxon>
        <taxon>Burkholderiales</taxon>
        <taxon>Alcaligenaceae</taxon>
        <taxon>Bordetella</taxon>
    </lineage>
</organism>
<accession>Q7WF75</accession>
<proteinExistence type="inferred from homology"/>
<feature type="chain" id="PRO_0000214306" description="UPF0301 protein BB4405">
    <location>
        <begin position="1"/>
        <end position="201"/>
    </location>
</feature>
<gene>
    <name type="ordered locus">BB4405</name>
</gene>
<sequence>MTDSHRPDADDIPDDDELSTDFSNQFLLAMPGVVEGSLAGTVIYICEHTRRGALGLVINRPTDLTLATLFERIDLKLEIGPVKDEMVFFGGPVQTDRGFVLHAPAGDYTSSINLGELALTTSRDVLQAVADGNGPARMLVTLGYAGWGAGQLESEMAQNSWLSVGADSHIIFDVAPEDRYPAALKLLGVDPVMLAGGAGHA</sequence>
<dbReference type="EMBL" id="BX640450">
    <property type="protein sequence ID" value="CAE34768.1"/>
    <property type="status" value="ALT_INIT"/>
    <property type="molecule type" value="Genomic_DNA"/>
</dbReference>
<dbReference type="RefSeq" id="WP_010927118.1">
    <property type="nucleotide sequence ID" value="NC_002927.3"/>
</dbReference>
<dbReference type="SMR" id="Q7WF75"/>
<dbReference type="KEGG" id="bbr:BB4405"/>
<dbReference type="eggNOG" id="COG1678">
    <property type="taxonomic scope" value="Bacteria"/>
</dbReference>
<dbReference type="HOGENOM" id="CLU_057596_1_0_4"/>
<dbReference type="Proteomes" id="UP000001027">
    <property type="component" value="Chromosome"/>
</dbReference>
<dbReference type="GO" id="GO:0005829">
    <property type="term" value="C:cytosol"/>
    <property type="evidence" value="ECO:0007669"/>
    <property type="project" value="TreeGrafter"/>
</dbReference>
<dbReference type="Gene3D" id="3.40.1740.10">
    <property type="entry name" value="VC0467-like"/>
    <property type="match status" value="1"/>
</dbReference>
<dbReference type="HAMAP" id="MF_00758">
    <property type="entry name" value="UPF0301"/>
    <property type="match status" value="1"/>
</dbReference>
<dbReference type="InterPro" id="IPR003774">
    <property type="entry name" value="AlgH-like"/>
</dbReference>
<dbReference type="NCBIfam" id="NF001266">
    <property type="entry name" value="PRK00228.1-1"/>
    <property type="match status" value="1"/>
</dbReference>
<dbReference type="NCBIfam" id="NF001267">
    <property type="entry name" value="PRK00228.1-2"/>
    <property type="match status" value="1"/>
</dbReference>
<dbReference type="PANTHER" id="PTHR30327">
    <property type="entry name" value="UNCHARACTERIZED PROTEIN YQGE"/>
    <property type="match status" value="1"/>
</dbReference>
<dbReference type="PANTHER" id="PTHR30327:SF1">
    <property type="entry name" value="UPF0301 PROTEIN YQGE"/>
    <property type="match status" value="1"/>
</dbReference>
<dbReference type="Pfam" id="PF02622">
    <property type="entry name" value="DUF179"/>
    <property type="match status" value="1"/>
</dbReference>
<dbReference type="SUPFAM" id="SSF143456">
    <property type="entry name" value="VC0467-like"/>
    <property type="match status" value="1"/>
</dbReference>
<evidence type="ECO:0000255" key="1">
    <source>
        <dbReference type="HAMAP-Rule" id="MF_00758"/>
    </source>
</evidence>
<evidence type="ECO:0000305" key="2"/>
<reference key="1">
    <citation type="journal article" date="2003" name="Nat. Genet.">
        <title>Comparative analysis of the genome sequences of Bordetella pertussis, Bordetella parapertussis and Bordetella bronchiseptica.</title>
        <authorList>
            <person name="Parkhill J."/>
            <person name="Sebaihia M."/>
            <person name="Preston A."/>
            <person name="Murphy L.D."/>
            <person name="Thomson N.R."/>
            <person name="Harris D.E."/>
            <person name="Holden M.T.G."/>
            <person name="Churcher C.M."/>
            <person name="Bentley S.D."/>
            <person name="Mungall K.L."/>
            <person name="Cerdeno-Tarraga A.-M."/>
            <person name="Temple L."/>
            <person name="James K.D."/>
            <person name="Harris B."/>
            <person name="Quail M.A."/>
            <person name="Achtman M."/>
            <person name="Atkin R."/>
            <person name="Baker S."/>
            <person name="Basham D."/>
            <person name="Bason N."/>
            <person name="Cherevach I."/>
            <person name="Chillingworth T."/>
            <person name="Collins M."/>
            <person name="Cronin A."/>
            <person name="Davis P."/>
            <person name="Doggett J."/>
            <person name="Feltwell T."/>
            <person name="Goble A."/>
            <person name="Hamlin N."/>
            <person name="Hauser H."/>
            <person name="Holroyd S."/>
            <person name="Jagels K."/>
            <person name="Leather S."/>
            <person name="Moule S."/>
            <person name="Norberczak H."/>
            <person name="O'Neil S."/>
            <person name="Ormond D."/>
            <person name="Price C."/>
            <person name="Rabbinowitsch E."/>
            <person name="Rutter S."/>
            <person name="Sanders M."/>
            <person name="Saunders D."/>
            <person name="Seeger K."/>
            <person name="Sharp S."/>
            <person name="Simmonds M."/>
            <person name="Skelton J."/>
            <person name="Squares R."/>
            <person name="Squares S."/>
            <person name="Stevens K."/>
            <person name="Unwin L."/>
            <person name="Whitehead S."/>
            <person name="Barrell B.G."/>
            <person name="Maskell D.J."/>
        </authorList>
    </citation>
    <scope>NUCLEOTIDE SEQUENCE [LARGE SCALE GENOMIC DNA]</scope>
    <source>
        <strain>ATCC BAA-588 / NCTC 13252 / RB50</strain>
    </source>
</reference>